<reference key="1">
    <citation type="journal article" date="2007" name="PLoS ONE">
        <title>Molecular correlates of host specialization in Staphylococcus aureus.</title>
        <authorList>
            <person name="Herron-Olson L."/>
            <person name="Fitzgerald J.R."/>
            <person name="Musser J.M."/>
            <person name="Kapur V."/>
        </authorList>
    </citation>
    <scope>NUCLEOTIDE SEQUENCE [LARGE SCALE GENOMIC DNA]</scope>
    <source>
        <strain>bovine RF122 / ET3-1</strain>
    </source>
</reference>
<protein>
    <recommendedName>
        <fullName evidence="1">Small ribosomal subunit protein uS11</fullName>
    </recommendedName>
    <alternativeName>
        <fullName evidence="2">30S ribosomal protein S11</fullName>
    </alternativeName>
</protein>
<accession>Q2YYM1</accession>
<dbReference type="EMBL" id="AJ938182">
    <property type="protein sequence ID" value="CAI81787.1"/>
    <property type="molecule type" value="Genomic_DNA"/>
</dbReference>
<dbReference type="RefSeq" id="WP_000101625.1">
    <property type="nucleotide sequence ID" value="NC_007622.1"/>
</dbReference>
<dbReference type="PDB" id="6FXC">
    <property type="method" value="EM"/>
    <property type="resolution" value="6.76 A"/>
    <property type="chains" value="Ak/Bk=15-128"/>
</dbReference>
<dbReference type="PDBsum" id="6FXC"/>
<dbReference type="EMDB" id="EMD-3637"/>
<dbReference type="SMR" id="Q2YYM1"/>
<dbReference type="GeneID" id="98346537"/>
<dbReference type="KEGG" id="sab:SAB2098c"/>
<dbReference type="HOGENOM" id="CLU_072439_5_0_9"/>
<dbReference type="GO" id="GO:1990904">
    <property type="term" value="C:ribonucleoprotein complex"/>
    <property type="evidence" value="ECO:0007669"/>
    <property type="project" value="UniProtKB-KW"/>
</dbReference>
<dbReference type="GO" id="GO:0005840">
    <property type="term" value="C:ribosome"/>
    <property type="evidence" value="ECO:0007669"/>
    <property type="project" value="UniProtKB-KW"/>
</dbReference>
<dbReference type="GO" id="GO:0019843">
    <property type="term" value="F:rRNA binding"/>
    <property type="evidence" value="ECO:0007669"/>
    <property type="project" value="UniProtKB-UniRule"/>
</dbReference>
<dbReference type="GO" id="GO:0003735">
    <property type="term" value="F:structural constituent of ribosome"/>
    <property type="evidence" value="ECO:0007669"/>
    <property type="project" value="InterPro"/>
</dbReference>
<dbReference type="GO" id="GO:0006412">
    <property type="term" value="P:translation"/>
    <property type="evidence" value="ECO:0007669"/>
    <property type="project" value="UniProtKB-UniRule"/>
</dbReference>
<dbReference type="FunFam" id="3.30.420.80:FF:000001">
    <property type="entry name" value="30S ribosomal protein S11"/>
    <property type="match status" value="1"/>
</dbReference>
<dbReference type="Gene3D" id="3.30.420.80">
    <property type="entry name" value="Ribosomal protein S11"/>
    <property type="match status" value="1"/>
</dbReference>
<dbReference type="HAMAP" id="MF_01310">
    <property type="entry name" value="Ribosomal_uS11"/>
    <property type="match status" value="1"/>
</dbReference>
<dbReference type="InterPro" id="IPR001971">
    <property type="entry name" value="Ribosomal_uS11"/>
</dbReference>
<dbReference type="InterPro" id="IPR019981">
    <property type="entry name" value="Ribosomal_uS11_bac-type"/>
</dbReference>
<dbReference type="InterPro" id="IPR018102">
    <property type="entry name" value="Ribosomal_uS11_CS"/>
</dbReference>
<dbReference type="InterPro" id="IPR036967">
    <property type="entry name" value="Ribosomal_uS11_sf"/>
</dbReference>
<dbReference type="NCBIfam" id="NF003698">
    <property type="entry name" value="PRK05309.1"/>
    <property type="match status" value="1"/>
</dbReference>
<dbReference type="NCBIfam" id="TIGR03632">
    <property type="entry name" value="uS11_bact"/>
    <property type="match status" value="1"/>
</dbReference>
<dbReference type="PANTHER" id="PTHR11759">
    <property type="entry name" value="40S RIBOSOMAL PROTEIN S14/30S RIBOSOMAL PROTEIN S11"/>
    <property type="match status" value="1"/>
</dbReference>
<dbReference type="Pfam" id="PF00411">
    <property type="entry name" value="Ribosomal_S11"/>
    <property type="match status" value="1"/>
</dbReference>
<dbReference type="PIRSF" id="PIRSF002131">
    <property type="entry name" value="Ribosomal_S11"/>
    <property type="match status" value="1"/>
</dbReference>
<dbReference type="SUPFAM" id="SSF53137">
    <property type="entry name" value="Translational machinery components"/>
    <property type="match status" value="1"/>
</dbReference>
<dbReference type="PROSITE" id="PS00054">
    <property type="entry name" value="RIBOSOMAL_S11"/>
    <property type="match status" value="1"/>
</dbReference>
<comment type="function">
    <text evidence="1">Located on the platform of the 30S subunit, it bridges several disparate RNA helices of the 16S rRNA. Forms part of the Shine-Dalgarno cleft in the 70S ribosome.</text>
</comment>
<comment type="subunit">
    <text evidence="1">Part of the 30S ribosomal subunit. Interacts with proteins S7 and S18. Binds to IF-3.</text>
</comment>
<comment type="similarity">
    <text evidence="1">Belongs to the universal ribosomal protein uS11 family.</text>
</comment>
<gene>
    <name evidence="1" type="primary">rpsK</name>
    <name type="ordered locus">SAB2098c</name>
</gene>
<name>RS11_STAAB</name>
<keyword id="KW-0002">3D-structure</keyword>
<keyword id="KW-0687">Ribonucleoprotein</keyword>
<keyword id="KW-0689">Ribosomal protein</keyword>
<keyword id="KW-0694">RNA-binding</keyword>
<keyword id="KW-0699">rRNA-binding</keyword>
<feature type="chain" id="PRO_0000230432" description="Small ribosomal subunit protein uS11">
    <location>
        <begin position="1"/>
        <end position="129"/>
    </location>
</feature>
<evidence type="ECO:0000255" key="1">
    <source>
        <dbReference type="HAMAP-Rule" id="MF_01310"/>
    </source>
</evidence>
<evidence type="ECO:0000305" key="2"/>
<sequence>MARKQVSRKRRVKKNIENGVAHIRSTFNNTIVTITDEFGNALSWSSAGALGFKGSKKSTPFAAQMASETASKSAMEHGLKTVEVTVKGPGPGRESAIRALQSAGLEVTAIRDVTPVPHNGCRPPKRRRV</sequence>
<organism>
    <name type="scientific">Staphylococcus aureus (strain bovine RF122 / ET3-1)</name>
    <dbReference type="NCBI Taxonomy" id="273036"/>
    <lineage>
        <taxon>Bacteria</taxon>
        <taxon>Bacillati</taxon>
        <taxon>Bacillota</taxon>
        <taxon>Bacilli</taxon>
        <taxon>Bacillales</taxon>
        <taxon>Staphylococcaceae</taxon>
        <taxon>Staphylococcus</taxon>
    </lineage>
</organism>
<proteinExistence type="evidence at protein level"/>